<comment type="function">
    <text evidence="1">Catalyzes the attachment of serine to tRNA(Ser). Is also able to aminoacylate tRNA(Sec) with serine, to form the misacylated tRNA L-seryl-tRNA(Sec), which will be further converted into selenocysteinyl-tRNA(Sec).</text>
</comment>
<comment type="catalytic activity">
    <reaction evidence="1">
        <text>tRNA(Ser) + L-serine + ATP = L-seryl-tRNA(Ser) + AMP + diphosphate + H(+)</text>
        <dbReference type="Rhea" id="RHEA:12292"/>
        <dbReference type="Rhea" id="RHEA-COMP:9669"/>
        <dbReference type="Rhea" id="RHEA-COMP:9703"/>
        <dbReference type="ChEBI" id="CHEBI:15378"/>
        <dbReference type="ChEBI" id="CHEBI:30616"/>
        <dbReference type="ChEBI" id="CHEBI:33019"/>
        <dbReference type="ChEBI" id="CHEBI:33384"/>
        <dbReference type="ChEBI" id="CHEBI:78442"/>
        <dbReference type="ChEBI" id="CHEBI:78533"/>
        <dbReference type="ChEBI" id="CHEBI:456215"/>
        <dbReference type="EC" id="6.1.1.11"/>
    </reaction>
</comment>
<comment type="catalytic activity">
    <reaction evidence="1">
        <text>tRNA(Sec) + L-serine + ATP = L-seryl-tRNA(Sec) + AMP + diphosphate + H(+)</text>
        <dbReference type="Rhea" id="RHEA:42580"/>
        <dbReference type="Rhea" id="RHEA-COMP:9742"/>
        <dbReference type="Rhea" id="RHEA-COMP:10128"/>
        <dbReference type="ChEBI" id="CHEBI:15378"/>
        <dbReference type="ChEBI" id="CHEBI:30616"/>
        <dbReference type="ChEBI" id="CHEBI:33019"/>
        <dbReference type="ChEBI" id="CHEBI:33384"/>
        <dbReference type="ChEBI" id="CHEBI:78442"/>
        <dbReference type="ChEBI" id="CHEBI:78533"/>
        <dbReference type="ChEBI" id="CHEBI:456215"/>
        <dbReference type="EC" id="6.1.1.11"/>
    </reaction>
</comment>
<comment type="pathway">
    <text evidence="1">Aminoacyl-tRNA biosynthesis; selenocysteinyl-tRNA(Sec) biosynthesis; L-seryl-tRNA(Sec) from L-serine and tRNA(Sec): step 1/1.</text>
</comment>
<comment type="subunit">
    <text evidence="1">Homodimer. The tRNA molecule binds across the dimer.</text>
</comment>
<comment type="subcellular location">
    <subcellularLocation>
        <location evidence="1">Cytoplasm</location>
    </subcellularLocation>
</comment>
<comment type="domain">
    <text evidence="1">Consists of two distinct domains, a catalytic core and a N-terminal extension that is involved in tRNA binding.</text>
</comment>
<comment type="similarity">
    <text evidence="1">Belongs to the class-II aminoacyl-tRNA synthetase family. Type-1 seryl-tRNA synthetase subfamily.</text>
</comment>
<gene>
    <name evidence="1" type="primary">serS2</name>
    <name type="ordered locus">lp_1012</name>
</gene>
<protein>
    <recommendedName>
        <fullName evidence="1">Serine--tRNA ligase 2</fullName>
        <ecNumber evidence="1">6.1.1.11</ecNumber>
    </recommendedName>
    <alternativeName>
        <fullName evidence="1">Seryl-tRNA synthetase 2</fullName>
        <shortName evidence="1">SerRS 2</shortName>
    </alternativeName>
    <alternativeName>
        <fullName evidence="1">Seryl-tRNA(Ser/Sec) synthetase 2</fullName>
    </alternativeName>
</protein>
<keyword id="KW-0030">Aminoacyl-tRNA synthetase</keyword>
<keyword id="KW-0067">ATP-binding</keyword>
<keyword id="KW-0963">Cytoplasm</keyword>
<keyword id="KW-0436">Ligase</keyword>
<keyword id="KW-0547">Nucleotide-binding</keyword>
<keyword id="KW-0648">Protein biosynthesis</keyword>
<keyword id="KW-1185">Reference proteome</keyword>
<accession>Q88XZ7</accession>
<accession>F9UMJ4</accession>
<evidence type="ECO:0000255" key="1">
    <source>
        <dbReference type="HAMAP-Rule" id="MF_00176"/>
    </source>
</evidence>
<proteinExistence type="inferred from homology"/>
<dbReference type="EC" id="6.1.1.11" evidence="1"/>
<dbReference type="EMBL" id="AL935263">
    <property type="protein sequence ID" value="CCC78433.1"/>
    <property type="molecule type" value="Genomic_DNA"/>
</dbReference>
<dbReference type="RefSeq" id="YP_004888947.1">
    <property type="nucleotide sequence ID" value="NC_004567.2"/>
</dbReference>
<dbReference type="SMR" id="Q88XZ7"/>
<dbReference type="STRING" id="220668.lp_1012"/>
<dbReference type="EnsemblBacteria" id="CCC78433">
    <property type="protein sequence ID" value="CCC78433"/>
    <property type="gene ID" value="lp_1012"/>
</dbReference>
<dbReference type="KEGG" id="lpl:lp_1012"/>
<dbReference type="PATRIC" id="fig|220668.9.peg.858"/>
<dbReference type="eggNOG" id="COG0172">
    <property type="taxonomic scope" value="Bacteria"/>
</dbReference>
<dbReference type="HOGENOM" id="CLU_023797_1_1_9"/>
<dbReference type="OrthoDB" id="9804647at2"/>
<dbReference type="PhylomeDB" id="Q88XZ7"/>
<dbReference type="UniPathway" id="UPA00906">
    <property type="reaction ID" value="UER00895"/>
</dbReference>
<dbReference type="Proteomes" id="UP000000432">
    <property type="component" value="Chromosome"/>
</dbReference>
<dbReference type="GO" id="GO:0005737">
    <property type="term" value="C:cytoplasm"/>
    <property type="evidence" value="ECO:0007669"/>
    <property type="project" value="UniProtKB-SubCell"/>
</dbReference>
<dbReference type="GO" id="GO:0005524">
    <property type="term" value="F:ATP binding"/>
    <property type="evidence" value="ECO:0007669"/>
    <property type="project" value="UniProtKB-UniRule"/>
</dbReference>
<dbReference type="GO" id="GO:0140096">
    <property type="term" value="F:catalytic activity, acting on a protein"/>
    <property type="evidence" value="ECO:0007669"/>
    <property type="project" value="UniProtKB-ARBA"/>
</dbReference>
<dbReference type="GO" id="GO:0004828">
    <property type="term" value="F:serine-tRNA ligase activity"/>
    <property type="evidence" value="ECO:0007669"/>
    <property type="project" value="UniProtKB-UniRule"/>
</dbReference>
<dbReference type="GO" id="GO:0016740">
    <property type="term" value="F:transferase activity"/>
    <property type="evidence" value="ECO:0007669"/>
    <property type="project" value="UniProtKB-ARBA"/>
</dbReference>
<dbReference type="GO" id="GO:0016260">
    <property type="term" value="P:selenocysteine biosynthetic process"/>
    <property type="evidence" value="ECO:0007669"/>
    <property type="project" value="UniProtKB-UniRule"/>
</dbReference>
<dbReference type="GO" id="GO:0006434">
    <property type="term" value="P:seryl-tRNA aminoacylation"/>
    <property type="evidence" value="ECO:0007669"/>
    <property type="project" value="UniProtKB-UniRule"/>
</dbReference>
<dbReference type="CDD" id="cd00770">
    <property type="entry name" value="SerRS_core"/>
    <property type="match status" value="1"/>
</dbReference>
<dbReference type="Gene3D" id="3.30.930.10">
    <property type="entry name" value="Bira Bifunctional Protein, Domain 2"/>
    <property type="match status" value="1"/>
</dbReference>
<dbReference type="Gene3D" id="1.10.287.40">
    <property type="entry name" value="Serine-tRNA synthetase, tRNA binding domain"/>
    <property type="match status" value="1"/>
</dbReference>
<dbReference type="HAMAP" id="MF_00176">
    <property type="entry name" value="Ser_tRNA_synth_type1"/>
    <property type="match status" value="1"/>
</dbReference>
<dbReference type="InterPro" id="IPR002314">
    <property type="entry name" value="aa-tRNA-synt_IIb"/>
</dbReference>
<dbReference type="InterPro" id="IPR006195">
    <property type="entry name" value="aa-tRNA-synth_II"/>
</dbReference>
<dbReference type="InterPro" id="IPR045864">
    <property type="entry name" value="aa-tRNA-synth_II/BPL/LPL"/>
</dbReference>
<dbReference type="InterPro" id="IPR002317">
    <property type="entry name" value="Ser-tRNA-ligase_type_1"/>
</dbReference>
<dbReference type="InterPro" id="IPR015866">
    <property type="entry name" value="Ser-tRNA-synth_1_N"/>
</dbReference>
<dbReference type="InterPro" id="IPR042103">
    <property type="entry name" value="SerRS_1_N_sf"/>
</dbReference>
<dbReference type="InterPro" id="IPR033729">
    <property type="entry name" value="SerRS_core"/>
</dbReference>
<dbReference type="InterPro" id="IPR010978">
    <property type="entry name" value="tRNA-bd_arm"/>
</dbReference>
<dbReference type="NCBIfam" id="TIGR00414">
    <property type="entry name" value="serS"/>
    <property type="match status" value="1"/>
</dbReference>
<dbReference type="PANTHER" id="PTHR43697:SF1">
    <property type="entry name" value="SERINE--TRNA LIGASE"/>
    <property type="match status" value="1"/>
</dbReference>
<dbReference type="PANTHER" id="PTHR43697">
    <property type="entry name" value="SERYL-TRNA SYNTHETASE"/>
    <property type="match status" value="1"/>
</dbReference>
<dbReference type="Pfam" id="PF02403">
    <property type="entry name" value="Seryl_tRNA_N"/>
    <property type="match status" value="1"/>
</dbReference>
<dbReference type="Pfam" id="PF00587">
    <property type="entry name" value="tRNA-synt_2b"/>
    <property type="match status" value="1"/>
</dbReference>
<dbReference type="PIRSF" id="PIRSF001529">
    <property type="entry name" value="Ser-tRNA-synth_IIa"/>
    <property type="match status" value="1"/>
</dbReference>
<dbReference type="PRINTS" id="PR00981">
    <property type="entry name" value="TRNASYNTHSER"/>
</dbReference>
<dbReference type="SUPFAM" id="SSF55681">
    <property type="entry name" value="Class II aaRS and biotin synthetases"/>
    <property type="match status" value="1"/>
</dbReference>
<dbReference type="SUPFAM" id="SSF46589">
    <property type="entry name" value="tRNA-binding arm"/>
    <property type="match status" value="1"/>
</dbReference>
<dbReference type="PROSITE" id="PS50862">
    <property type="entry name" value="AA_TRNA_LIGASE_II"/>
    <property type="match status" value="1"/>
</dbReference>
<name>SYS2_LACPL</name>
<feature type="chain" id="PRO_0000122066" description="Serine--tRNA ligase 2">
    <location>
        <begin position="1"/>
        <end position="425"/>
    </location>
</feature>
<feature type="binding site" evidence="1">
    <location>
        <begin position="230"/>
        <end position="232"/>
    </location>
    <ligand>
        <name>L-serine</name>
        <dbReference type="ChEBI" id="CHEBI:33384"/>
    </ligand>
</feature>
<feature type="binding site" evidence="1">
    <location>
        <begin position="261"/>
        <end position="263"/>
    </location>
    <ligand>
        <name>ATP</name>
        <dbReference type="ChEBI" id="CHEBI:30616"/>
    </ligand>
</feature>
<feature type="binding site" evidence="1">
    <location>
        <position position="284"/>
    </location>
    <ligand>
        <name>L-serine</name>
        <dbReference type="ChEBI" id="CHEBI:33384"/>
    </ligand>
</feature>
<feature type="binding site" evidence="1">
    <location>
        <begin position="348"/>
        <end position="351"/>
    </location>
    <ligand>
        <name>ATP</name>
        <dbReference type="ChEBI" id="CHEBI:30616"/>
    </ligand>
</feature>
<feature type="binding site" evidence="1">
    <location>
        <position position="383"/>
    </location>
    <ligand>
        <name>L-serine</name>
        <dbReference type="ChEBI" id="CHEBI:33384"/>
    </ligand>
</feature>
<sequence>MLDVKMIRQNPDFVKEQLGHRGVAASDIDDLLAADEKRRELIAKSEQLKSTRNQVSGEISQKKRNKEDASAEIAEMQKVSADVKTLDEERRTVDAQVQDMAAHLPNMPHPDVPVSLKEEDAVELRRIGTPRHFDFTPKAHWDIGEDLGILDFERGAKVSGSRFLYYVGDGAKLERAVYNFFLDQHEAEGYTEVLPPYMVTDESMYGTGQFPKFKEDAFRITTQDLTLIPTAEVPLVNYYRDEVIPAEKLPVYFTALSPAFREEAGSAGRDTKGLIRLHQFNKVEMVKFTKPEDSWDELEKLTNNAESLLKKLGLPYHVITLTTGDMSFTAAMTHDLEVWFPEQDKYREISSCSNCTDFQARRAHIQYRDDDGKLQFVHTLNGSGLAVGRTVAAILENYQNEDGTVTIPDVLVPYMHGKTKIEKQG</sequence>
<reference key="1">
    <citation type="journal article" date="2003" name="Proc. Natl. Acad. Sci. U.S.A.">
        <title>Complete genome sequence of Lactobacillus plantarum WCFS1.</title>
        <authorList>
            <person name="Kleerebezem M."/>
            <person name="Boekhorst J."/>
            <person name="van Kranenburg R."/>
            <person name="Molenaar D."/>
            <person name="Kuipers O.P."/>
            <person name="Leer R."/>
            <person name="Tarchini R."/>
            <person name="Peters S.A."/>
            <person name="Sandbrink H.M."/>
            <person name="Fiers M.W.E.J."/>
            <person name="Stiekema W."/>
            <person name="Klein Lankhorst R.M."/>
            <person name="Bron P.A."/>
            <person name="Hoffer S.M."/>
            <person name="Nierop Groot M.N."/>
            <person name="Kerkhoven R."/>
            <person name="De Vries M."/>
            <person name="Ursing B."/>
            <person name="De Vos W.M."/>
            <person name="Siezen R.J."/>
        </authorList>
    </citation>
    <scope>NUCLEOTIDE SEQUENCE [LARGE SCALE GENOMIC DNA]</scope>
    <source>
        <strain>ATCC BAA-793 / NCIMB 8826 / WCFS1</strain>
    </source>
</reference>
<reference key="2">
    <citation type="journal article" date="2012" name="J. Bacteriol.">
        <title>Complete resequencing and reannotation of the Lactobacillus plantarum WCFS1 genome.</title>
        <authorList>
            <person name="Siezen R.J."/>
            <person name="Francke C."/>
            <person name="Renckens B."/>
            <person name="Boekhorst J."/>
            <person name="Wels M."/>
            <person name="Kleerebezem M."/>
            <person name="van Hijum S.A."/>
        </authorList>
    </citation>
    <scope>NUCLEOTIDE SEQUENCE [LARGE SCALE GENOMIC DNA]</scope>
    <scope>GENOME REANNOTATION</scope>
    <source>
        <strain>ATCC BAA-793 / NCIMB 8826 / WCFS1</strain>
    </source>
</reference>
<organism>
    <name type="scientific">Lactiplantibacillus plantarum (strain ATCC BAA-793 / NCIMB 8826 / WCFS1)</name>
    <name type="common">Lactobacillus plantarum</name>
    <dbReference type="NCBI Taxonomy" id="220668"/>
    <lineage>
        <taxon>Bacteria</taxon>
        <taxon>Bacillati</taxon>
        <taxon>Bacillota</taxon>
        <taxon>Bacilli</taxon>
        <taxon>Lactobacillales</taxon>
        <taxon>Lactobacillaceae</taxon>
        <taxon>Lactiplantibacillus</taxon>
    </lineage>
</organism>